<protein>
    <recommendedName>
        <fullName>Putative replication origin binding protein</fullName>
    </recommendedName>
    <alternativeName>
        <fullName evidence="3">D2 helicase</fullName>
    </alternativeName>
</protein>
<proteinExistence type="evidence at protein level"/>
<keyword id="KW-0067">ATP-binding</keyword>
<keyword id="KW-0238">DNA-binding</keyword>
<keyword id="KW-0244">Early protein</keyword>
<keyword id="KW-0547">Nucleotide-binding</keyword>
<keyword id="KW-1185">Reference proteome</keyword>
<organismHost>
    <name type="scientific">Escherichia coli</name>
    <dbReference type="NCBI Taxonomy" id="562"/>
</organismHost>
<dbReference type="EMBL" id="AY543070">
    <property type="protein sequence ID" value="AAS77154.1"/>
    <property type="molecule type" value="Genomic_DNA"/>
</dbReference>
<dbReference type="EMBL" id="AY587007">
    <property type="protein sequence ID" value="AAX12037.1"/>
    <property type="molecule type" value="Genomic_DNA"/>
</dbReference>
<dbReference type="EMBL" id="AY692264">
    <property type="protein sequence ID" value="AAU05245.1"/>
    <property type="molecule type" value="Genomic_DNA"/>
</dbReference>
<dbReference type="RefSeq" id="YP_006936.1">
    <property type="nucleotide sequence ID" value="NC_005859.1"/>
</dbReference>
<dbReference type="GeneID" id="2777687"/>
<dbReference type="KEGG" id="vg:2777687"/>
<dbReference type="Proteomes" id="UP000002107">
    <property type="component" value="Genome"/>
</dbReference>
<dbReference type="Proteomes" id="UP000002141">
    <property type="component" value="Segment"/>
</dbReference>
<dbReference type="Proteomes" id="UP000002503">
    <property type="component" value="Segment"/>
</dbReference>
<dbReference type="GO" id="GO:0005524">
    <property type="term" value="F:ATP binding"/>
    <property type="evidence" value="ECO:0007669"/>
    <property type="project" value="UniProtKB-KW"/>
</dbReference>
<dbReference type="GO" id="GO:0003678">
    <property type="term" value="F:DNA helicase activity"/>
    <property type="evidence" value="ECO:0000314"/>
    <property type="project" value="GO_Central"/>
</dbReference>
<dbReference type="GO" id="GO:0003688">
    <property type="term" value="F:DNA replication origin binding"/>
    <property type="evidence" value="ECO:0007669"/>
    <property type="project" value="InterPro"/>
</dbReference>
<dbReference type="GO" id="GO:0006260">
    <property type="term" value="P:DNA replication"/>
    <property type="evidence" value="ECO:0007669"/>
    <property type="project" value="InterPro"/>
</dbReference>
<dbReference type="InterPro" id="IPR027417">
    <property type="entry name" value="P-loop_NTPase"/>
</dbReference>
<dbReference type="InterPro" id="IPR003450">
    <property type="entry name" value="Replication_origin-bd"/>
</dbReference>
<dbReference type="Pfam" id="PF02399">
    <property type="entry name" value="Herpes_ori_bp"/>
    <property type="match status" value="1"/>
</dbReference>
<dbReference type="SUPFAM" id="SSF52540">
    <property type="entry name" value="P-loop containing nucleoside triphosphate hydrolases"/>
    <property type="match status" value="1"/>
</dbReference>
<name>OBP_BPT5</name>
<comment type="function">
    <text evidence="2">Displays bipolar ssDNA and dsDNA unwinding activities that require the same core catalytic residues for unwinding in either direction, the 3'-5' direction being more robust.</text>
</comment>
<comment type="induction">
    <text evidence="5">Expressed in the early phase of the viral replicative cycle.</text>
</comment>
<comment type="similarity">
    <text evidence="4">Belongs to the herpesviridae oribp family.</text>
</comment>
<evidence type="ECO:0000255" key="1">
    <source>
        <dbReference type="PROSITE-ProRule" id="PRU00541"/>
    </source>
</evidence>
<evidence type="ECO:0000269" key="2">
    <source>
    </source>
</evidence>
<evidence type="ECO:0000303" key="3">
    <source>
    </source>
</evidence>
<evidence type="ECO:0000305" key="4"/>
<evidence type="ECO:0000305" key="5">
    <source>
    </source>
</evidence>
<evidence type="ECO:0000312" key="6">
    <source>
        <dbReference type="EMBL" id="AAS77154.1"/>
    </source>
</evidence>
<evidence type="ECO:0000312" key="7">
    <source>
        <dbReference type="EMBL" id="AAU05245.1"/>
    </source>
</evidence>
<evidence type="ECO:0000312" key="8">
    <source>
        <dbReference type="EMBL" id="AAX12037.1"/>
    </source>
</evidence>
<gene>
    <name evidence="8" type="primary">obp</name>
    <name type="synonym">D2</name>
    <name evidence="6" type="ORF">T5.108</name>
    <name evidence="7" type="ORF">T5p106</name>
</gene>
<accession>Q6QGH9</accession>
<accession>Q66LV7</accession>
<organism>
    <name type="scientific">Escherichia phage T5</name>
    <name type="common">Enterobacteria phage T5</name>
    <dbReference type="NCBI Taxonomy" id="2695836"/>
    <lineage>
        <taxon>Viruses</taxon>
        <taxon>Duplodnaviria</taxon>
        <taxon>Heunggongvirae</taxon>
        <taxon>Uroviricota</taxon>
        <taxon>Caudoviricetes</taxon>
        <taxon>Demerecviridae</taxon>
        <taxon>Markadamsvirinae</taxon>
        <taxon>Tequintavirus</taxon>
        <taxon>Tequintavirus T5</taxon>
    </lineage>
</organism>
<sequence length="928" mass="105350">MFSILQGHAGFSRDLATGIWREIKAEDYTFAKRFSKEHPEGKPASMPFKFDVIEEHDPQSLAEMLPLMRRLTSDPHIVAVRGRCLAPKNNVRRKKGNFNVSNPSNIIAMDVDGILDTGGYDKFNLVGMARHIIKMLNSISEDMFPLDAGFIAHASSSAGLKPGIRMHLMLESNVKVTQGQLKFLFTSINDSSKQKFGFDIADLAYYSSVQLHYFADPLFSDGIVDPFKAESKPRLVYVKGSKVNLPNNLVDYETTRGEFKEEFYSLLDQIKGKKIASDKVEETISELEEADDGVYLRIIPKLYHRALEDGVDFAWLEREIKPALSEYIATKDNSRNIQDYFNNGRKQALKAFVNNSKREIPLNLKGVPLKKLEVDSPPEVPYLKINIVPPKGHITFVKASLGTGKTTAVTKWLDAGVLPGNFLAVTNTRALVSSNAKKFSAGQYDKSVDMLNFKRGAIDRMSTTIHSLHKFKSFIGQIDTIFIDECDAVMNDLLFAPVVKQRRECIQVLRDILMTAKTVILSDGDISAETIEAYGSLIDFDKPVAFYNHHRKMLSKAHAYEFPDESSIWVALQTSLEMGEKSILVSDCGPDELNEKGMALRRNTGALVKEIHSNSTSDVDIRRILDYTTNELIDQQIDCLLCSPSVTSGVDFNYFDNVFVITRTSNQAPNMRFQAIRRDRGAQNIYYFIDKSTSGFSAGSEQYNIDEGWLELAQQLYARRRELESRNYTSTLRYYLLDQGATIDIFSESWGTIEGAGKEYTEERIKAILHSTPDYCAPRHADAYEAKLLLVRYYHLESIKDVTVEHVEQYIKDKPNDRAAFFHKMHEMFWEDIKKCSNVTIKPFIEALKGKKKDFFLKTGQSANPKYARMYLGMMGIGKDMNTENIVDWYRTYCKIECMPIPFKFMTEEERAMAEEVMSELGATNEDA</sequence>
<feature type="chain" id="PRO_0000435554" description="Putative replication origin binding protein">
    <location>
        <begin position="1"/>
        <end position="928"/>
    </location>
</feature>
<feature type="domain" description="Helicase ATP-binding" evidence="1">
    <location>
        <begin position="386"/>
        <end position="516"/>
    </location>
</feature>
<feature type="short sequence motif" description="DEAD box" evidence="1">
    <location>
        <begin position="484"/>
        <end position="487"/>
    </location>
</feature>
<feature type="binding site" evidence="1">
    <location>
        <begin position="399"/>
        <end position="406"/>
    </location>
    <ligand>
        <name>ATP</name>
        <dbReference type="ChEBI" id="CHEBI:30616"/>
    </ligand>
</feature>
<feature type="mutagenesis site" description="Complete loss of ATPase and helicase activities. No effect on ssDNA binding." evidence="2">
    <original>K</original>
    <variation>E</variation>
    <location>
        <position position="405"/>
    </location>
</feature>
<feature type="sequence conflict" description="In Ref. 3; AAU05245." evidence="4" ref="3">
    <original>E</original>
    <variation>G</variation>
    <location>
        <position position="262"/>
    </location>
</feature>
<reference key="1">
    <citation type="submission" date="2004-01" db="EMBL/GenBank/DDBJ databases">
        <title>Bacteriophage T5 complete genome.</title>
        <authorList>
            <person name="Ksenzenko V.N."/>
            <person name="Kaliman A.V."/>
            <person name="Krutilina A.I."/>
            <person name="Shlyapnikov M.G."/>
        </authorList>
    </citation>
    <scope>NUCLEOTIDE SEQUENCE [LARGE SCALE GENOMIC DNA]</scope>
</reference>
<reference key="2">
    <citation type="journal article" date="2005" name="Virology">
        <title>Complete genome sequence of bacteriophage T5.</title>
        <authorList>
            <person name="Wang J."/>
            <person name="Jiang Y."/>
            <person name="Vincent M."/>
            <person name="Sun Y."/>
            <person name="Yu H."/>
            <person name="Wang J."/>
            <person name="Bao Q."/>
            <person name="Kong H."/>
            <person name="Hu S."/>
        </authorList>
    </citation>
    <scope>NUCLEOTIDE SEQUENCE [LARGE SCALE GENOMIC DNA]</scope>
    <scope>INDUCTION</scope>
    <source>
        <strain>ATCC 11303-B5</strain>
    </source>
</reference>
<reference key="3">
    <citation type="journal article" date="2014" name="J. Virol.">
        <title>Insights into bacteriophage T5 structure from analysis of its morphogenesis genes and protein components.</title>
        <authorList>
            <person name="Zivanovic Y."/>
            <person name="Confalonieri F."/>
            <person name="Ponchon L."/>
            <person name="Lurz R."/>
            <person name="Chami M."/>
            <person name="Flayhan A."/>
            <person name="Renouard M."/>
            <person name="Huet A."/>
            <person name="Decottignies P."/>
            <person name="Davidson A.R."/>
            <person name="Breyton C."/>
            <person name="Boulanger P."/>
        </authorList>
    </citation>
    <scope>NUCLEOTIDE SEQUENCE [LARGE SCALE GENOMIC DNA]</scope>
    <source>
        <strain>St0 deletion mutant</strain>
    </source>
</reference>
<reference key="4">
    <citation type="journal article" date="2013" name="Nucleic Acids Res.">
        <title>Characterization of an unusual bipolar helicase encoded by bacteriophage T5.</title>
        <authorList>
            <person name="Wong I.N."/>
            <person name="Sayers J.R."/>
            <person name="Sanders C.M."/>
        </authorList>
    </citation>
    <scope>FUNCTION</scope>
    <scope>MUTAGENESIS OF LYS-405</scope>
</reference>